<gene>
    <name type="primary">ssb</name>
</gene>
<name>SSB_PROMI</name>
<comment type="function">
    <text evidence="5">Plays an important role in DNA replication, recombination and repair. Binds to ssDNA and to an array of partner proteins to recruit them to their sites of action during DNA metabolism (Probable).</text>
</comment>
<comment type="subunit">
    <text evidence="2 4">Homotetramer.</text>
</comment>
<accession>P28046</accession>
<feature type="initiator methionine" description="Removed" evidence="1">
    <location>
        <position position="1"/>
    </location>
</feature>
<feature type="chain" id="PRO_0000096076" description="Single-stranded DNA-binding protein">
    <location>
        <begin position="2"/>
        <end position="174"/>
    </location>
</feature>
<feature type="domain" description="SSB" evidence="2">
    <location>
        <begin position="6"/>
        <end position="111"/>
    </location>
</feature>
<feature type="DNA-binding region" evidence="2">
    <location>
        <begin position="55"/>
        <end position="61"/>
    </location>
</feature>
<feature type="region of interest" description="Disordered" evidence="3">
    <location>
        <begin position="110"/>
        <end position="174"/>
    </location>
</feature>
<feature type="short sequence motif" description="Important for interaction with partner proteins" evidence="2">
    <location>
        <begin position="169"/>
        <end position="174"/>
    </location>
</feature>
<feature type="compositionally biased region" description="Low complexity" evidence="3">
    <location>
        <begin position="132"/>
        <end position="160"/>
    </location>
</feature>
<protein>
    <recommendedName>
        <fullName evidence="2">Single-stranded DNA-binding protein</fullName>
        <shortName evidence="2">SSB</shortName>
    </recommendedName>
</protein>
<dbReference type="EMBL" id="X65079">
    <property type="protein sequence ID" value="CAA46206.1"/>
    <property type="molecule type" value="Genomic_DNA"/>
</dbReference>
<dbReference type="PIR" id="S19955">
    <property type="entry name" value="S19955"/>
</dbReference>
<dbReference type="SMR" id="P28046"/>
<dbReference type="STRING" id="584.AOUC001_01755"/>
<dbReference type="OMA" id="FLRCNVW"/>
<dbReference type="OrthoDB" id="9809878at2"/>
<dbReference type="GO" id="GO:0009295">
    <property type="term" value="C:nucleoid"/>
    <property type="evidence" value="ECO:0007669"/>
    <property type="project" value="TreeGrafter"/>
</dbReference>
<dbReference type="GO" id="GO:0003697">
    <property type="term" value="F:single-stranded DNA binding"/>
    <property type="evidence" value="ECO:0007669"/>
    <property type="project" value="UniProtKB-UniRule"/>
</dbReference>
<dbReference type="GO" id="GO:0006310">
    <property type="term" value="P:DNA recombination"/>
    <property type="evidence" value="ECO:0007669"/>
    <property type="project" value="UniProtKB-UniRule"/>
</dbReference>
<dbReference type="GO" id="GO:0006281">
    <property type="term" value="P:DNA repair"/>
    <property type="evidence" value="ECO:0007669"/>
    <property type="project" value="UniProtKB-UniRule"/>
</dbReference>
<dbReference type="GO" id="GO:0006260">
    <property type="term" value="P:DNA replication"/>
    <property type="evidence" value="ECO:0007669"/>
    <property type="project" value="UniProtKB-UniRule"/>
</dbReference>
<dbReference type="CDD" id="cd04496">
    <property type="entry name" value="SSB_OBF"/>
    <property type="match status" value="1"/>
</dbReference>
<dbReference type="FunFam" id="2.40.50.140:FF:000065">
    <property type="entry name" value="Single-stranded DNA-binding protein"/>
    <property type="match status" value="1"/>
</dbReference>
<dbReference type="Gene3D" id="2.40.50.140">
    <property type="entry name" value="Nucleic acid-binding proteins"/>
    <property type="match status" value="1"/>
</dbReference>
<dbReference type="HAMAP" id="MF_00984">
    <property type="entry name" value="SSB"/>
    <property type="match status" value="1"/>
</dbReference>
<dbReference type="InterPro" id="IPR012340">
    <property type="entry name" value="NA-bd_OB-fold"/>
</dbReference>
<dbReference type="InterPro" id="IPR000424">
    <property type="entry name" value="Primosome_PriB/ssb"/>
</dbReference>
<dbReference type="InterPro" id="IPR011344">
    <property type="entry name" value="ssDNA-bd"/>
</dbReference>
<dbReference type="NCBIfam" id="NF004357">
    <property type="entry name" value="PRK05733.1"/>
    <property type="match status" value="1"/>
</dbReference>
<dbReference type="NCBIfam" id="NF006533">
    <property type="entry name" value="PRK09010.1"/>
    <property type="match status" value="1"/>
</dbReference>
<dbReference type="NCBIfam" id="TIGR00621">
    <property type="entry name" value="ssb"/>
    <property type="match status" value="1"/>
</dbReference>
<dbReference type="PANTHER" id="PTHR10302">
    <property type="entry name" value="SINGLE-STRANDED DNA-BINDING PROTEIN"/>
    <property type="match status" value="1"/>
</dbReference>
<dbReference type="PANTHER" id="PTHR10302:SF27">
    <property type="entry name" value="SINGLE-STRANDED DNA-BINDING PROTEIN"/>
    <property type="match status" value="1"/>
</dbReference>
<dbReference type="Pfam" id="PF00436">
    <property type="entry name" value="SSB"/>
    <property type="match status" value="1"/>
</dbReference>
<dbReference type="SUPFAM" id="SSF50249">
    <property type="entry name" value="Nucleic acid-binding proteins"/>
    <property type="match status" value="1"/>
</dbReference>
<dbReference type="PROSITE" id="PS50935">
    <property type="entry name" value="SSB"/>
    <property type="match status" value="1"/>
</dbReference>
<sequence>MASRGVNKVILIGNLGQDPEIRYMPSGGAVANLTLATSESWRDKQTGEMKEKTEWHRVVIFGKLAEIAGEYLRKGSQVYIEGQLQTRKWQDQSGQDRYSTEVVVNIGGTMQMLGGRGGQDNAPSQGQGGWGQPQQPQASQQFSGGAPSRPAQQPAAAPAPSNEPPMDFDDDIPF</sequence>
<proteinExistence type="evidence at protein level"/>
<keyword id="KW-0227">DNA damage</keyword>
<keyword id="KW-0233">DNA recombination</keyword>
<keyword id="KW-0234">DNA repair</keyword>
<keyword id="KW-0235">DNA replication</keyword>
<keyword id="KW-0238">DNA-binding</keyword>
<reference key="1">
    <citation type="journal article" date="1994" name="Microbiology">
        <title>Cloning and sequencing of the Proteus mirabilis gene for a single-stranded DNA-binding protein (SSB) and complementation of Escherichia coli ssb point and deletion mutations.</title>
        <authorList>
            <person name="de Vries J."/>
            <person name="Wackernagel W."/>
        </authorList>
    </citation>
    <scope>NUCLEOTIDE SEQUENCE [GENOMIC DNA]</scope>
    <source>
        <strain>PG1300</strain>
    </source>
</reference>
<reference key="2">
    <citation type="journal article" date="1994" name="Eur. J. Biochem.">
        <title>The single-stranded-DNA-binding proteins (SSB) of Proteus mirabilis and Serratia marcescens.</title>
        <authorList>
            <person name="de Vries J."/>
            <person name="Genschel J."/>
            <person name="Urbanke C."/>
            <person name="Thole H."/>
            <person name="Wackernagel W."/>
        </authorList>
    </citation>
    <scope>FUNCTION</scope>
    <scope>DNA-BINDING</scope>
    <scope>SUBUNIT</scope>
</reference>
<evidence type="ECO:0000250" key="1"/>
<evidence type="ECO:0000255" key="2">
    <source>
        <dbReference type="HAMAP-Rule" id="MF_00984"/>
    </source>
</evidence>
<evidence type="ECO:0000256" key="3">
    <source>
        <dbReference type="SAM" id="MobiDB-lite"/>
    </source>
</evidence>
<evidence type="ECO:0000269" key="4">
    <source>
    </source>
</evidence>
<evidence type="ECO:0000305" key="5">
    <source>
    </source>
</evidence>
<organism>
    <name type="scientific">Proteus mirabilis</name>
    <dbReference type="NCBI Taxonomy" id="584"/>
    <lineage>
        <taxon>Bacteria</taxon>
        <taxon>Pseudomonadati</taxon>
        <taxon>Pseudomonadota</taxon>
        <taxon>Gammaproteobacteria</taxon>
        <taxon>Enterobacterales</taxon>
        <taxon>Morganellaceae</taxon>
        <taxon>Proteus</taxon>
    </lineage>
</organism>